<accession>P86564</accession>
<dbReference type="GO" id="GO:0005576">
    <property type="term" value="C:extracellular region"/>
    <property type="evidence" value="ECO:0007005"/>
    <property type="project" value="UniProtKB"/>
</dbReference>
<dbReference type="GO" id="GO:0007218">
    <property type="term" value="P:neuropeptide signaling pathway"/>
    <property type="evidence" value="ECO:0007669"/>
    <property type="project" value="UniProtKB-KW"/>
</dbReference>
<keyword id="KW-0027">Amidation</keyword>
<keyword id="KW-0903">Direct protein sequencing</keyword>
<keyword id="KW-0527">Neuropeptide</keyword>
<keyword id="KW-0964">Secreted</keyword>
<name>TRP2_BANDI</name>
<evidence type="ECO:0000269" key="1">
    <source>
    </source>
</evidence>
<evidence type="ECO:0000303" key="2">
    <source>
    </source>
</evidence>
<evidence type="ECO:0000305" key="3"/>
<reference evidence="3" key="1">
    <citation type="journal article" date="2009" name="Peptides">
        <title>Neuropeptides in Heteroptera: identification of allatotropin-related peptide and tachykinin-related peptides using MALDI-TOF mass spectrometry.</title>
        <authorList>
            <person name="Neupert S."/>
            <person name="Russell W.K."/>
            <person name="Russell D.H."/>
            <person name="Lopez J.D. Jr."/>
            <person name="Predel R."/>
            <person name="Nachman R.J."/>
        </authorList>
    </citation>
    <scope>PROTEIN SEQUENCE</scope>
    <scope>SUBCELLULAR LOCATION</scope>
    <scope>TISSUE SPECIFICITY</scope>
    <scope>AMIDATION AT ARG-10</scope>
    <source>
        <tissue evidence="1">Antennal lobe</tissue>
    </source>
</reference>
<comment type="subcellular location">
    <subcellularLocation>
        <location evidence="1 3">Secreted</location>
    </subcellularLocation>
</comment>
<comment type="tissue specificity">
    <text evidence="1">Expressed in the antennal lobe (at protein level).</text>
</comment>
<sequence length="10" mass="1024">APAAGFFGMR</sequence>
<organism>
    <name type="scientific">Banasa dimiata</name>
    <name type="common">Banasa stink bug</name>
    <name type="synonym">Pentatoma dimiata</name>
    <dbReference type="NCBI Taxonomy" id="756487"/>
    <lineage>
        <taxon>Eukaryota</taxon>
        <taxon>Metazoa</taxon>
        <taxon>Ecdysozoa</taxon>
        <taxon>Arthropoda</taxon>
        <taxon>Hexapoda</taxon>
        <taxon>Insecta</taxon>
        <taxon>Pterygota</taxon>
        <taxon>Neoptera</taxon>
        <taxon>Paraneoptera</taxon>
        <taxon>Hemiptera</taxon>
        <taxon>Heteroptera</taxon>
        <taxon>Panheteroptera</taxon>
        <taxon>Pentatomomorpha</taxon>
        <taxon>Pentatomoidea</taxon>
        <taxon>Pentatomidae</taxon>
        <taxon>Pentatominae</taxon>
        <taxon>Banasa</taxon>
    </lineage>
</organism>
<protein>
    <recommendedName>
        <fullName evidence="2">Tachykinin-related peptide 2</fullName>
        <shortName evidence="2">TKRP-2</shortName>
    </recommendedName>
</protein>
<proteinExistence type="evidence at protein level"/>
<feature type="peptide" id="PRO_0000395633" description="Tachykinin-related peptide 2" evidence="1">
    <location>
        <begin position="1"/>
        <end position="10"/>
    </location>
</feature>
<feature type="modified residue" description="Arginine amide" evidence="1">
    <location>
        <position position="10"/>
    </location>
</feature>